<dbReference type="EMBL" id="M84741">
    <property type="protein sequence ID" value="AAA52010.1"/>
    <property type="status" value="ALT_INIT"/>
    <property type="molecule type" value="mRNA"/>
</dbReference>
<dbReference type="EMBL" id="S42457">
    <property type="protein sequence ID" value="AAB22778.1"/>
    <property type="molecule type" value="mRNA"/>
</dbReference>
<dbReference type="EMBL" id="AK292021">
    <property type="protein sequence ID" value="BAF84710.1"/>
    <property type="status" value="ALT_INIT"/>
    <property type="molecule type" value="mRNA"/>
</dbReference>
<dbReference type="EMBL" id="AC096749">
    <property type="status" value="NOT_ANNOTATED_CDS"/>
    <property type="molecule type" value="Genomic_DNA"/>
</dbReference>
<dbReference type="EMBL" id="AC107068">
    <property type="protein sequence ID" value="AAY40919.1"/>
    <property type="molecule type" value="Genomic_DNA"/>
</dbReference>
<dbReference type="EMBL" id="CH471069">
    <property type="protein sequence ID" value="EAW93048.1"/>
    <property type="molecule type" value="Genomic_DNA"/>
</dbReference>
<dbReference type="EMBL" id="S76062">
    <property type="protein sequence ID" value="AAD14206.1"/>
    <property type="molecule type" value="Genomic_DNA"/>
</dbReference>
<dbReference type="CCDS" id="CCDS43226.2"/>
<dbReference type="PIR" id="A42161">
    <property type="entry name" value="A42161"/>
</dbReference>
<dbReference type="RefSeq" id="NP_000078.3">
    <property type="nucleotide sequence ID" value="NM_000087.5"/>
</dbReference>
<dbReference type="RefSeq" id="NP_001136036.2">
    <property type="nucleotide sequence ID" value="NM_001142564.2"/>
</dbReference>
<dbReference type="RefSeq" id="NP_001366199.1">
    <property type="nucleotide sequence ID" value="NM_001379270.1"/>
</dbReference>
<dbReference type="RefSeq" id="XP_011511925.1">
    <property type="nucleotide sequence ID" value="XM_011513623.2"/>
</dbReference>
<dbReference type="RefSeq" id="XP_016863201.1">
    <property type="nucleotide sequence ID" value="XM_017007712.1"/>
</dbReference>
<dbReference type="PDB" id="7LFT">
    <property type="method" value="EM"/>
    <property type="resolution" value="2.60 A"/>
    <property type="chains" value="A/B/C/D=140-686"/>
</dbReference>
<dbReference type="PDB" id="7LFW">
    <property type="method" value="EM"/>
    <property type="resolution" value="2.90 A"/>
    <property type="chains" value="A/B/C/D=140-686"/>
</dbReference>
<dbReference type="PDB" id="7LFX">
    <property type="method" value="EM"/>
    <property type="resolution" value="3.10 A"/>
    <property type="chains" value="A/B/C/D=140-686"/>
</dbReference>
<dbReference type="PDB" id="7LFY">
    <property type="method" value="EM"/>
    <property type="resolution" value="3.60 A"/>
    <property type="chains" value="A/B/C/D=140-686"/>
</dbReference>
<dbReference type="PDB" id="7LG1">
    <property type="method" value="EM"/>
    <property type="resolution" value="2.70 A"/>
    <property type="chains" value="A/B/C/D=140-686"/>
</dbReference>
<dbReference type="PDB" id="7RH9">
    <property type="method" value="EM"/>
    <property type="resolution" value="2.61 A"/>
    <property type="chains" value="A/C/D=140-686"/>
</dbReference>
<dbReference type="PDB" id="7RHG">
    <property type="method" value="EM"/>
    <property type="resolution" value="2.88 A"/>
    <property type="chains" value="A/C/D=140-686"/>
</dbReference>
<dbReference type="PDB" id="7RHH">
    <property type="method" value="EM"/>
    <property type="resolution" value="3.31 A"/>
    <property type="chains" value="A/C/D=140-686"/>
</dbReference>
<dbReference type="PDB" id="7RHI">
    <property type="method" value="EM"/>
    <property type="resolution" value="3.31 A"/>
    <property type="chains" value="A/C/D=140-686"/>
</dbReference>
<dbReference type="PDB" id="7RHJ">
    <property type="method" value="EM"/>
    <property type="resolution" value="2.88 A"/>
    <property type="chains" value="A/C/D=140-686"/>
</dbReference>
<dbReference type="PDB" id="7RHK">
    <property type="method" value="EM"/>
    <property type="resolution" value="3.27 A"/>
    <property type="chains" value="A/C/D=140-686"/>
</dbReference>
<dbReference type="PDB" id="7RHL">
    <property type="method" value="EM"/>
    <property type="resolution" value="3.03 A"/>
    <property type="chains" value="A/C/D=140-686"/>
</dbReference>
<dbReference type="PDBsum" id="7LFT"/>
<dbReference type="PDBsum" id="7LFW"/>
<dbReference type="PDBsum" id="7LFX"/>
<dbReference type="PDBsum" id="7LFY"/>
<dbReference type="PDBsum" id="7LG1"/>
<dbReference type="PDBsum" id="7RH9"/>
<dbReference type="PDBsum" id="7RHG"/>
<dbReference type="PDBsum" id="7RHH"/>
<dbReference type="PDBsum" id="7RHI"/>
<dbReference type="PDBsum" id="7RHJ"/>
<dbReference type="PDBsum" id="7RHK"/>
<dbReference type="PDBsum" id="7RHL"/>
<dbReference type="EMDB" id="EMD-23306"/>
<dbReference type="EMDB" id="EMD-23307"/>
<dbReference type="EMDB" id="EMD-23308"/>
<dbReference type="EMDB" id="EMD-23309"/>
<dbReference type="EMDB" id="EMD-23310"/>
<dbReference type="EMDB" id="EMD-24458"/>
<dbReference type="EMDB" id="EMD-24460"/>
<dbReference type="EMDB" id="EMD-24461"/>
<dbReference type="EMDB" id="EMD-24462"/>
<dbReference type="EMDB" id="EMD-24463"/>
<dbReference type="EMDB" id="EMD-24464"/>
<dbReference type="EMDB" id="EMD-24465"/>
<dbReference type="SMR" id="P29973"/>
<dbReference type="BioGRID" id="107659">
    <property type="interactions" value="39"/>
</dbReference>
<dbReference type="FunCoup" id="P29973">
    <property type="interactions" value="404"/>
</dbReference>
<dbReference type="IntAct" id="P29973">
    <property type="interactions" value="6"/>
</dbReference>
<dbReference type="MINT" id="P29973"/>
<dbReference type="STRING" id="9606.ENSP00000384264"/>
<dbReference type="DrugBank" id="DB04209">
    <property type="generic name" value="Dequalinium"/>
</dbReference>
<dbReference type="DrugBank" id="DB07997">
    <property type="generic name" value="N-[2-(METHYLAMINO)ETHYL]-5-ISOQUINOLINESULFONAMIDE"/>
</dbReference>
<dbReference type="DrugCentral" id="P29973"/>
<dbReference type="GuidetoPHARMACOLOGY" id="394"/>
<dbReference type="TCDB" id="1.A.1.5.3">
    <property type="family name" value="the voltage-gated ion channel (vic) superfamily"/>
</dbReference>
<dbReference type="GlyCosmos" id="P29973">
    <property type="glycosylation" value="1 site, No reported glycans"/>
</dbReference>
<dbReference type="GlyGen" id="P29973">
    <property type="glycosylation" value="1 site"/>
</dbReference>
<dbReference type="iPTMnet" id="P29973"/>
<dbReference type="PhosphoSitePlus" id="P29973"/>
<dbReference type="BioMuta" id="CNGA1"/>
<dbReference type="DMDM" id="239938910"/>
<dbReference type="jPOST" id="P29973"/>
<dbReference type="MassIVE" id="P29973"/>
<dbReference type="PaxDb" id="9606-ENSP00000384264"/>
<dbReference type="PeptideAtlas" id="P29973"/>
<dbReference type="Antibodypedia" id="23791">
    <property type="antibodies" value="96 antibodies from 24 providers"/>
</dbReference>
<dbReference type="DNASU" id="1259"/>
<dbReference type="Ensembl" id="ENST00000402813.9">
    <property type="protein sequence ID" value="ENSP00000384264.5"/>
    <property type="gene ID" value="ENSG00000198515.16"/>
</dbReference>
<dbReference type="Ensembl" id="ENST00000420489.7">
    <property type="protein sequence ID" value="ENSP00000389881.3"/>
    <property type="gene ID" value="ENSG00000198515.16"/>
</dbReference>
<dbReference type="Ensembl" id="ENST00000514170.7">
    <property type="protein sequence ID" value="ENSP00000426862.3"/>
    <property type="gene ID" value="ENSG00000198515.16"/>
</dbReference>
<dbReference type="GeneID" id="1259"/>
<dbReference type="KEGG" id="hsa:1259"/>
<dbReference type="MANE-Select" id="ENST00000514170.7">
    <property type="protein sequence ID" value="ENSP00000426862.3"/>
    <property type="RefSeq nucleotide sequence ID" value="NM_001379270.1"/>
    <property type="RefSeq protein sequence ID" value="NP_001366199.1"/>
</dbReference>
<dbReference type="UCSC" id="uc003gxt.5">
    <property type="organism name" value="human"/>
</dbReference>
<dbReference type="AGR" id="HGNC:2148"/>
<dbReference type="CTD" id="1259"/>
<dbReference type="DisGeNET" id="1259"/>
<dbReference type="GeneCards" id="CNGA1"/>
<dbReference type="GeneReviews" id="CNGA1"/>
<dbReference type="HGNC" id="HGNC:2148">
    <property type="gene designation" value="CNGA1"/>
</dbReference>
<dbReference type="HPA" id="ENSG00000198515">
    <property type="expression patterns" value="Tissue enriched (retina)"/>
</dbReference>
<dbReference type="MalaCards" id="CNGA1"/>
<dbReference type="MIM" id="123825">
    <property type="type" value="gene"/>
</dbReference>
<dbReference type="MIM" id="613756">
    <property type="type" value="phenotype"/>
</dbReference>
<dbReference type="neXtProt" id="NX_P29973"/>
<dbReference type="OpenTargets" id="ENSG00000198515"/>
<dbReference type="Orphanet" id="791">
    <property type="disease" value="Retinitis pigmentosa"/>
</dbReference>
<dbReference type="PharmGKB" id="PA26658"/>
<dbReference type="VEuPathDB" id="HostDB:ENSG00000198515"/>
<dbReference type="eggNOG" id="KOG0500">
    <property type="taxonomic scope" value="Eukaryota"/>
</dbReference>
<dbReference type="GeneTree" id="ENSGT00940000156074"/>
<dbReference type="HOGENOM" id="CLU_005746_12_0_1"/>
<dbReference type="InParanoid" id="P29973"/>
<dbReference type="OMA" id="ENSEYIF"/>
<dbReference type="OrthoDB" id="421226at2759"/>
<dbReference type="PAN-GO" id="P29973">
    <property type="GO annotations" value="7 GO annotations based on evolutionary models"/>
</dbReference>
<dbReference type="PhylomeDB" id="P29973"/>
<dbReference type="TreeFam" id="TF319048"/>
<dbReference type="PathwayCommons" id="P29973"/>
<dbReference type="Reactome" id="R-HSA-2485179">
    <property type="pathway name" value="Activation of the phototransduction cascade"/>
</dbReference>
<dbReference type="Reactome" id="R-HSA-2514859">
    <property type="pathway name" value="Inactivation, recovery and regulation of the phototransduction cascade"/>
</dbReference>
<dbReference type="SignaLink" id="P29973"/>
<dbReference type="BioGRID-ORCS" id="1259">
    <property type="hits" value="27 hits in 1143 CRISPR screens"/>
</dbReference>
<dbReference type="ChiTaRS" id="CNGA1">
    <property type="organism name" value="human"/>
</dbReference>
<dbReference type="GeneWiki" id="Cyclic_nucleotide-gated_channel_alpha_1"/>
<dbReference type="GenomeRNAi" id="1259"/>
<dbReference type="Pharos" id="P29973">
    <property type="development level" value="Tchem"/>
</dbReference>
<dbReference type="PRO" id="PR:P29973"/>
<dbReference type="Proteomes" id="UP000005640">
    <property type="component" value="Chromosome 4"/>
</dbReference>
<dbReference type="RNAct" id="P29973">
    <property type="molecule type" value="protein"/>
</dbReference>
<dbReference type="Bgee" id="ENSG00000198515">
    <property type="expression patterns" value="Expressed in lower esophagus mucosa and 120 other cell types or tissues"/>
</dbReference>
<dbReference type="ExpressionAtlas" id="P29973">
    <property type="expression patterns" value="baseline and differential"/>
</dbReference>
<dbReference type="GO" id="GO:0017071">
    <property type="term" value="C:intracellular cyclic nucleotide activated cation channel complex"/>
    <property type="evidence" value="ECO:0000318"/>
    <property type="project" value="GO_Central"/>
</dbReference>
<dbReference type="GO" id="GO:0042622">
    <property type="term" value="C:photoreceptor outer segment membrane"/>
    <property type="evidence" value="ECO:0007669"/>
    <property type="project" value="Ensembl"/>
</dbReference>
<dbReference type="GO" id="GO:0005886">
    <property type="term" value="C:plasma membrane"/>
    <property type="evidence" value="ECO:0000318"/>
    <property type="project" value="GO_Central"/>
</dbReference>
<dbReference type="GO" id="GO:0120200">
    <property type="term" value="C:rod photoreceptor outer segment"/>
    <property type="evidence" value="ECO:0000250"/>
    <property type="project" value="UniProtKB"/>
</dbReference>
<dbReference type="GO" id="GO:0005262">
    <property type="term" value="F:calcium channel activity"/>
    <property type="evidence" value="ECO:0007669"/>
    <property type="project" value="UniProtKB-KW"/>
</dbReference>
<dbReference type="GO" id="GO:0030552">
    <property type="term" value="F:cAMP binding"/>
    <property type="evidence" value="ECO:0000314"/>
    <property type="project" value="UniProtKB"/>
</dbReference>
<dbReference type="GO" id="GO:0030553">
    <property type="term" value="F:cGMP binding"/>
    <property type="evidence" value="ECO:0000314"/>
    <property type="project" value="UniProtKB"/>
</dbReference>
<dbReference type="GO" id="GO:0005222">
    <property type="term" value="F:intracellularly cAMP-activated cation channel activity"/>
    <property type="evidence" value="ECO:0000314"/>
    <property type="project" value="UniProtKB"/>
</dbReference>
<dbReference type="GO" id="GO:0005223">
    <property type="term" value="F:intracellularly cGMP-activated cation channel activity"/>
    <property type="evidence" value="ECO:0000314"/>
    <property type="project" value="UniProtKB"/>
</dbReference>
<dbReference type="GO" id="GO:0044877">
    <property type="term" value="F:protein-containing complex binding"/>
    <property type="evidence" value="ECO:0000318"/>
    <property type="project" value="GO_Central"/>
</dbReference>
<dbReference type="GO" id="GO:0005272">
    <property type="term" value="F:sodium channel activity"/>
    <property type="evidence" value="ECO:0007669"/>
    <property type="project" value="UniProtKB-KW"/>
</dbReference>
<dbReference type="GO" id="GO:0006816">
    <property type="term" value="P:calcium ion transport"/>
    <property type="evidence" value="ECO:0000250"/>
    <property type="project" value="UniProtKB"/>
</dbReference>
<dbReference type="GO" id="GO:0098655">
    <property type="term" value="P:monoatomic cation transmembrane transport"/>
    <property type="evidence" value="ECO:0000318"/>
    <property type="project" value="GO_Central"/>
</dbReference>
<dbReference type="GO" id="GO:0006814">
    <property type="term" value="P:sodium ion transport"/>
    <property type="evidence" value="ECO:0000250"/>
    <property type="project" value="UniProtKB"/>
</dbReference>
<dbReference type="GO" id="GO:0007601">
    <property type="term" value="P:visual perception"/>
    <property type="evidence" value="ECO:0000304"/>
    <property type="project" value="ProtInc"/>
</dbReference>
<dbReference type="CDD" id="cd00038">
    <property type="entry name" value="CAP_ED"/>
    <property type="match status" value="1"/>
</dbReference>
<dbReference type="FunFam" id="1.20.5.170:FF:000069">
    <property type="entry name" value="cGMP-gated cation channel alpha-1"/>
    <property type="match status" value="1"/>
</dbReference>
<dbReference type="FunFam" id="2.60.120.10:FF:000002">
    <property type="entry name" value="Cyclic nucleotide gated channel alpha 1a"/>
    <property type="match status" value="1"/>
</dbReference>
<dbReference type="FunFam" id="1.10.287.630:FF:000001">
    <property type="entry name" value="Cyclic nucleotide-gated channel alpha 3"/>
    <property type="match status" value="1"/>
</dbReference>
<dbReference type="FunFam" id="1.10.287.70:FF:000030">
    <property type="entry name" value="Cyclic nucleotide-gated channel alpha 3"/>
    <property type="match status" value="1"/>
</dbReference>
<dbReference type="FunFam" id="1.20.5.300:FF:000002">
    <property type="entry name" value="Cyclic nucleotide-gated channel alpha 3"/>
    <property type="match status" value="1"/>
</dbReference>
<dbReference type="Gene3D" id="1.10.287.70">
    <property type="match status" value="1"/>
</dbReference>
<dbReference type="Gene3D" id="1.20.5.170">
    <property type="match status" value="1"/>
</dbReference>
<dbReference type="Gene3D" id="1.10.287.630">
    <property type="entry name" value="Helix hairpin bin"/>
    <property type="match status" value="1"/>
</dbReference>
<dbReference type="Gene3D" id="2.60.120.10">
    <property type="entry name" value="Jelly Rolls"/>
    <property type="match status" value="1"/>
</dbReference>
<dbReference type="InterPro" id="IPR032406">
    <property type="entry name" value="CLZ_dom"/>
</dbReference>
<dbReference type="InterPro" id="IPR050866">
    <property type="entry name" value="CNG_cation_channel"/>
</dbReference>
<dbReference type="InterPro" id="IPR018488">
    <property type="entry name" value="cNMP-bd_CS"/>
</dbReference>
<dbReference type="InterPro" id="IPR000595">
    <property type="entry name" value="cNMP-bd_dom"/>
</dbReference>
<dbReference type="InterPro" id="IPR018490">
    <property type="entry name" value="cNMP-bd_dom_sf"/>
</dbReference>
<dbReference type="InterPro" id="IPR005821">
    <property type="entry name" value="Ion_trans_dom"/>
</dbReference>
<dbReference type="InterPro" id="IPR014710">
    <property type="entry name" value="RmlC-like_jellyroll"/>
</dbReference>
<dbReference type="PANTHER" id="PTHR45638">
    <property type="entry name" value="CYCLIC NUCLEOTIDE-GATED CATION CHANNEL SUBUNIT A"/>
    <property type="match status" value="1"/>
</dbReference>
<dbReference type="PANTHER" id="PTHR45638:SF9">
    <property type="entry name" value="CYCLIC NUCLEOTIDE-GATED CHANNEL ROD PHOTORECEPTOR SUBUNIT ALPHA"/>
    <property type="match status" value="1"/>
</dbReference>
<dbReference type="Pfam" id="PF16526">
    <property type="entry name" value="CLZ"/>
    <property type="match status" value="1"/>
</dbReference>
<dbReference type="Pfam" id="PF00027">
    <property type="entry name" value="cNMP_binding"/>
    <property type="match status" value="1"/>
</dbReference>
<dbReference type="Pfam" id="PF00520">
    <property type="entry name" value="Ion_trans"/>
    <property type="match status" value="1"/>
</dbReference>
<dbReference type="SMART" id="SM00100">
    <property type="entry name" value="cNMP"/>
    <property type="match status" value="1"/>
</dbReference>
<dbReference type="SUPFAM" id="SSF51206">
    <property type="entry name" value="cAMP-binding domain-like"/>
    <property type="match status" value="1"/>
</dbReference>
<dbReference type="SUPFAM" id="SSF81324">
    <property type="entry name" value="Voltage-gated potassium channels"/>
    <property type="match status" value="1"/>
</dbReference>
<dbReference type="PROSITE" id="PS00888">
    <property type="entry name" value="CNMP_BINDING_1"/>
    <property type="match status" value="1"/>
</dbReference>
<dbReference type="PROSITE" id="PS00889">
    <property type="entry name" value="CNMP_BINDING_2"/>
    <property type="match status" value="1"/>
</dbReference>
<dbReference type="PROSITE" id="PS50042">
    <property type="entry name" value="CNMP_BINDING_3"/>
    <property type="match status" value="1"/>
</dbReference>
<organism>
    <name type="scientific">Homo sapiens</name>
    <name type="common">Human</name>
    <dbReference type="NCBI Taxonomy" id="9606"/>
    <lineage>
        <taxon>Eukaryota</taxon>
        <taxon>Metazoa</taxon>
        <taxon>Chordata</taxon>
        <taxon>Craniata</taxon>
        <taxon>Vertebrata</taxon>
        <taxon>Euteleostomi</taxon>
        <taxon>Mammalia</taxon>
        <taxon>Eutheria</taxon>
        <taxon>Euarchontoglires</taxon>
        <taxon>Primates</taxon>
        <taxon>Haplorrhini</taxon>
        <taxon>Catarrhini</taxon>
        <taxon>Hominidae</taxon>
        <taxon>Homo</taxon>
    </lineage>
</organism>
<sequence length="686" mass="79126">MKNNIINTQQSFVTMPNVIVPDIEKEIRRMENGACSSFSEDDDSASTSEESENENPHARGSFSYKSLRKGGPSQREQYLPGAIALFNVNNSSNKDQEPEEKKKKKKEKKSKSDDKNENKNDPEKKKKKKDKEKKKKEEKSKDKKEEEKKEVVVIDPSGNTYYNWLFCITLPVMYNWTMVIARACFDELQSDYLEYWLILDYVSDIVYLIDMFVRTRTGYLEQGLLVKEELKLINKYKSNLQFKLDVLSLIPTDLLYFKLGWNYPEIRLNRLLRFSRMFEFFQRTETRTNYPNIFRISNLVMYIVIIIHWNACVFYSISKAIGFGNDTWVYPDINDPEFGRLARKYVYSLYWSTLTLTTIGETPPPVRDSEYVFVVVDFLIGVLIFATIVGNIGSMISNMNAARAEFQARIDAIKQYMHFRNVSKDMEKRVIKWFDYLWTNKKTVDEKEVLKYLPDKLRAEIAINVHLDTLKKVRIFADCEAGLLVELVLKLQPQVYSPGDYICKKGDIGREMYIIKEGKLAVVADDGVTQFVVLSDGSYFGEISILNIKGSKAGNRRTANIKSIGYSDLFCLSKDDLMEALTEYPDAKTMLEEKGKQILMKDGLLDLNIANAGSDPKDLEEKVTRMEGSVDLLQTRFARILAEYESMQQKLKQRLTKVEKFLKPLIDTEFSSIEGPGAESGPIDST</sequence>
<keyword id="KW-0002">3D-structure</keyword>
<keyword id="KW-0106">Calcium</keyword>
<keyword id="KW-0107">Calcium channel</keyword>
<keyword id="KW-0109">Calcium transport</keyword>
<keyword id="KW-0114">cAMP</keyword>
<keyword id="KW-0116">cAMP-binding</keyword>
<keyword id="KW-1003">Cell membrane</keyword>
<keyword id="KW-0140">cGMP</keyword>
<keyword id="KW-0142">cGMP-binding</keyword>
<keyword id="KW-0175">Coiled coil</keyword>
<keyword id="KW-0225">Disease variant</keyword>
<keyword id="KW-0325">Glycoprotein</keyword>
<keyword id="KW-0407">Ion channel</keyword>
<keyword id="KW-0406">Ion transport</keyword>
<keyword id="KW-1071">Ligand-gated ion channel</keyword>
<keyword id="KW-0472">Membrane</keyword>
<keyword id="KW-0547">Nucleotide-binding</keyword>
<keyword id="KW-1267">Proteomics identification</keyword>
<keyword id="KW-1185">Reference proteome</keyword>
<keyword id="KW-0682">Retinitis pigmentosa</keyword>
<keyword id="KW-0716">Sensory transduction</keyword>
<keyword id="KW-0915">Sodium</keyword>
<keyword id="KW-0894">Sodium channel</keyword>
<keyword id="KW-0739">Sodium transport</keyword>
<keyword id="KW-0812">Transmembrane</keyword>
<keyword id="KW-1133">Transmembrane helix</keyword>
<keyword id="KW-0813">Transport</keyword>
<keyword id="KW-0844">Vision</keyword>
<protein>
    <recommendedName>
        <fullName>Cyclic nucleotide-gated channel alpha-1</fullName>
        <shortName>CNG channel alpha-1</shortName>
        <shortName>CNG-1</shortName>
        <shortName evidence="9">CNG1</shortName>
    </recommendedName>
    <alternativeName>
        <fullName>Cyclic nucleotide-gated channel, photoreceptor</fullName>
    </alternativeName>
    <alternativeName>
        <fullName evidence="10">Rod photoreceptor cGMP-gated cation channel subunit alpha</fullName>
    </alternativeName>
    <alternativeName>
        <fullName>cGMP-gated cation channel alpha-1</fullName>
    </alternativeName>
</protein>
<evidence type="ECO:0000250" key="1">
    <source>
        <dbReference type="UniProtKB" id="Q00194"/>
    </source>
</evidence>
<evidence type="ECO:0000255" key="2"/>
<evidence type="ECO:0000256" key="3">
    <source>
        <dbReference type="SAM" id="MobiDB-lite"/>
    </source>
</evidence>
<evidence type="ECO:0000269" key="4">
    <source>
    </source>
</evidence>
<evidence type="ECO:0000269" key="5">
    <source>
    </source>
</evidence>
<evidence type="ECO:0000269" key="6">
    <source>
    </source>
</evidence>
<evidence type="ECO:0000269" key="7">
    <source>
    </source>
</evidence>
<evidence type="ECO:0000269" key="8">
    <source>
    </source>
</evidence>
<evidence type="ECO:0000303" key="9">
    <source>
    </source>
</evidence>
<evidence type="ECO:0000303" key="10">
    <source>
    </source>
</evidence>
<evidence type="ECO:0000303" key="11">
    <source>
    </source>
</evidence>
<evidence type="ECO:0000305" key="12"/>
<evidence type="ECO:0000305" key="13">
    <source>
    </source>
</evidence>
<evidence type="ECO:0000312" key="14">
    <source>
        <dbReference type="HGNC" id="HGNC:2148"/>
    </source>
</evidence>
<evidence type="ECO:0007744" key="15">
    <source>
        <dbReference type="PDB" id="7RH9"/>
    </source>
</evidence>
<evidence type="ECO:0007744" key="16">
    <source>
        <dbReference type="PDB" id="7RHG"/>
    </source>
</evidence>
<evidence type="ECO:0007744" key="17">
    <source>
        <dbReference type="PDB" id="7RHH"/>
    </source>
</evidence>
<evidence type="ECO:0007744" key="18">
    <source>
        <dbReference type="PDB" id="7RHI"/>
    </source>
</evidence>
<evidence type="ECO:0007829" key="19">
    <source>
        <dbReference type="PDB" id="7LFT"/>
    </source>
</evidence>
<evidence type="ECO:0007829" key="20">
    <source>
        <dbReference type="PDB" id="7LG1"/>
    </source>
</evidence>
<evidence type="ECO:0007829" key="21">
    <source>
        <dbReference type="PDB" id="7RH9"/>
    </source>
</evidence>
<evidence type="ECO:0007829" key="22">
    <source>
        <dbReference type="PDB" id="7RHH"/>
    </source>
</evidence>
<evidence type="ECO:0007829" key="23">
    <source>
        <dbReference type="PDB" id="7RHL"/>
    </source>
</evidence>
<accession>P29973</accession>
<accession>A8K7K6</accession>
<accession>J3KPZ2</accession>
<accession>Q16279</accession>
<accession>Q16485</accession>
<accession>Q4W5E3</accession>
<gene>
    <name evidence="11 14" type="primary">CNGA1</name>
    <name type="synonym">CNCG</name>
    <name type="synonym">CNCG1</name>
</gene>
<name>CNGA1_HUMAN</name>
<comment type="function">
    <text evidence="1 6 7 8">Pore-forming subunit of the rod cyclic nucleotide-gated channel. Mediates rod photoresponses at dim light converting transient changes in intracellular cGMP levels into electrical signals. In the dark, cGMP levels are high and keep the channel open enabling a steady inward current carried by Na(+) and Ca(2+) ions that leads to membrane depolarization and neurotransmitter release from synaptic terminals. Upon photon absorption cGMP levels decline leading to channel closure and membrane hyperpolarization that ultimately slows neurotransmitter release and signals the presence of light, the end point of the phototransduction cascade. Conducts cGMP- and cAMP-gated ion currents, with permeability for monovalent and divalent cations. The selectivity for Ca(2+) over Na(+) increases with cGMP concentrations, whereas the selectivity among monovalent ions is independent of the cGMP levels.</text>
</comment>
<comment type="catalytic activity">
    <reaction evidence="1">
        <text>Ca(2+)(in) = Ca(2+)(out)</text>
        <dbReference type="Rhea" id="RHEA:29671"/>
        <dbReference type="ChEBI" id="CHEBI:29108"/>
    </reaction>
</comment>
<comment type="catalytic activity">
    <reaction evidence="1">
        <text>Na(+)(in) = Na(+)(out)</text>
        <dbReference type="Rhea" id="RHEA:34963"/>
        <dbReference type="ChEBI" id="CHEBI:29101"/>
    </reaction>
</comment>
<comment type="catalytic activity">
    <reaction evidence="1">
        <text>K(+)(in) = K(+)(out)</text>
        <dbReference type="Rhea" id="RHEA:29463"/>
        <dbReference type="ChEBI" id="CHEBI:29103"/>
    </reaction>
</comment>
<comment type="catalytic activity">
    <reaction evidence="1">
        <text>NH4(+)(in) = NH4(+)(out)</text>
        <dbReference type="Rhea" id="RHEA:28747"/>
        <dbReference type="ChEBI" id="CHEBI:28938"/>
    </reaction>
</comment>
<comment type="catalytic activity">
    <reaction evidence="1">
        <text>Rb(+)(in) = Rb(+)(out)</text>
        <dbReference type="Rhea" id="RHEA:78547"/>
        <dbReference type="ChEBI" id="CHEBI:49847"/>
    </reaction>
</comment>
<comment type="catalytic activity">
    <reaction evidence="1">
        <text>Li(+)(in) = Li(+)(out)</text>
        <dbReference type="Rhea" id="RHEA:78551"/>
        <dbReference type="ChEBI" id="CHEBI:49713"/>
    </reaction>
</comment>
<comment type="catalytic activity">
    <reaction evidence="1">
        <text>Cs(+)(in) = Cs(+)(out)</text>
        <dbReference type="Rhea" id="RHEA:78555"/>
        <dbReference type="ChEBI" id="CHEBI:49547"/>
    </reaction>
</comment>
<comment type="activity regulation">
    <text evidence="6 7">Channel opening is activated by cGMP and at a much lesser extent by cAMP. Ca(2+) binding concominantly blocks monovalent cation currents. Inhibited by L-cis-diltiazem.</text>
</comment>
<comment type="subunit">
    <text evidence="1 6 7">Forms heterotetrameric channels composed of CNGA1 and CNGB1 subunits with 3:1 stoichiometry (PubMed:34699778). May also form cyclic nucleotide-activated homotetrameric channels, that are efficiently activated by saturating cGMP, but poorly activated by saturating cAMP compared to the heterotetramer with CNGB1. The channel binds Ca(2+)-bound CALM1 via CaM1 and CaM2 regions of the CNGB1 subunit; this interaction modulates the affinity of the channel for cNMPs in response to intracellular Ca(2+) levels (By similarity) (PubMed:33651975).</text>
</comment>
<comment type="interaction">
    <interactant intactId="EBI-8417095">
        <id>P29973</id>
    </interactant>
    <interactant intactId="EBI-7639273">
        <id>Q5ICW4</id>
        <label>GRB14</label>
    </interactant>
    <organismsDiffer>true</organismsDiffer>
    <experiments>4</experiments>
</comment>
<comment type="interaction">
    <interactant intactId="EBI-8417095">
        <id>P29973</id>
    </interactant>
    <interactant intactId="EBI-8347358">
        <id>Q9JLM9</id>
        <label>Grb14</label>
    </interactant>
    <organismsDiffer>true</organismsDiffer>
    <experiments>2</experiments>
</comment>
<comment type="subcellular location">
    <subcellularLocation>
        <location evidence="8">Cell membrane</location>
        <topology evidence="2">Multi-pass membrane protein</topology>
    </subcellularLocation>
</comment>
<comment type="tissue specificity">
    <text>Rod cells in the retina.</text>
</comment>
<comment type="domain">
    <text evidence="7">The C-terminal coiled-coil domain mediates homotrimerization of CNGA1 subunit.</text>
</comment>
<comment type="domain">
    <text evidence="7">The cyclic nucleotide-binding domain (CNBD) comprises three helices and a beta-roll of eight beta-strands from CNGA1 and CNGB1 subunits. Upon cNMP binding transmits the conformational changes to the C-linker domain of the S6 helix to open the ion conduction pathway.</text>
</comment>
<comment type="domain">
    <text evidence="7">The ion conduction pathway consists of S5, S6 and pore helices from CNGA1 and CNGB1 subunits. It contains a central hydrophobic gate that opens upon cNMP binding.</text>
</comment>
<comment type="disease" evidence="5 8">
    <disease id="DI-03002">
        <name>Retinitis pigmentosa 49</name>
        <acronym>RP49</acronym>
        <description>A retinal dystrophy belonging to the group of pigmentary retinopathies. Retinitis pigmentosa is characterized by retinal pigment deposits visible on fundus examination and primary loss of rod photoreceptor cells followed by secondary loss of cone photoreceptors. Patients typically have night vision blindness and loss of midperipheral visual field. As their condition progresses, they lose their far peripheral visual field and eventually central vision as well.</description>
        <dbReference type="MIM" id="613756"/>
    </disease>
    <text>The disease is caused by variants affecting the gene represented in this entry.</text>
</comment>
<comment type="similarity">
    <text evidence="12">Belongs to the cyclic nucleotide-gated cation channel (TC 1.A.1.5) family. CNGA1 subfamily.</text>
</comment>
<comment type="sequence caution" evidence="12">
    <conflict type="erroneous initiation">
        <sequence resource="EMBL-CDS" id="AAA52010"/>
    </conflict>
    <text>Extended N-terminus.</text>
</comment>
<comment type="sequence caution" evidence="12">
    <conflict type="erroneous initiation">
        <sequence resource="EMBL-CDS" id="BAF84710"/>
    </conflict>
    <text>Extended N-terminus.</text>
</comment>
<reference key="1">
    <citation type="journal article" date="1992" name="J. Biol. Chem.">
        <title>Primary structure and chromosomal localization of human and mouse rod photoreceptor cGMP-gated cation channel.</title>
        <authorList>
            <person name="Pittler S.J."/>
            <person name="Lee A.K."/>
            <person name="Altherr M.R."/>
            <person name="Howard T.A."/>
            <person name="Seldin M.F."/>
            <person name="Hurwitz R.L."/>
            <person name="Wasmuth J.J."/>
            <person name="Baehr W."/>
        </authorList>
    </citation>
    <scope>NUCLEOTIDE SEQUENCE [MRNA]</scope>
    <source>
        <tissue>Retina</tissue>
    </source>
</reference>
<reference key="2">
    <citation type="journal article" date="1992" name="J. Neurosci.">
        <title>Human rod photoreceptor cGMP-gated channel: amino acid sequence, gene structure, and functional expression.</title>
        <authorList>
            <person name="Dhallan R.S."/>
            <person name="Macke J.P."/>
            <person name="Eddy R.L."/>
            <person name="Shows T.B."/>
            <person name="Reed R.R."/>
            <person name="Yau K.-W."/>
            <person name="Nathans J."/>
        </authorList>
    </citation>
    <scope>NUCLEOTIDE SEQUENCE [MRNA]</scope>
    <scope>VARIANT ASN-114</scope>
    <source>
        <tissue>Retina</tissue>
    </source>
</reference>
<reference key="3">
    <citation type="journal article" date="2004" name="Nat. Genet.">
        <title>Complete sequencing and characterization of 21,243 full-length human cDNAs.</title>
        <authorList>
            <person name="Ota T."/>
            <person name="Suzuki Y."/>
            <person name="Nishikawa T."/>
            <person name="Otsuki T."/>
            <person name="Sugiyama T."/>
            <person name="Irie R."/>
            <person name="Wakamatsu A."/>
            <person name="Hayashi K."/>
            <person name="Sato H."/>
            <person name="Nagai K."/>
            <person name="Kimura K."/>
            <person name="Makita H."/>
            <person name="Sekine M."/>
            <person name="Obayashi M."/>
            <person name="Nishi T."/>
            <person name="Shibahara T."/>
            <person name="Tanaka T."/>
            <person name="Ishii S."/>
            <person name="Yamamoto J."/>
            <person name="Saito K."/>
            <person name="Kawai Y."/>
            <person name="Isono Y."/>
            <person name="Nakamura Y."/>
            <person name="Nagahari K."/>
            <person name="Murakami K."/>
            <person name="Yasuda T."/>
            <person name="Iwayanagi T."/>
            <person name="Wagatsuma M."/>
            <person name="Shiratori A."/>
            <person name="Sudo H."/>
            <person name="Hosoiri T."/>
            <person name="Kaku Y."/>
            <person name="Kodaira H."/>
            <person name="Kondo H."/>
            <person name="Sugawara M."/>
            <person name="Takahashi M."/>
            <person name="Kanda K."/>
            <person name="Yokoi T."/>
            <person name="Furuya T."/>
            <person name="Kikkawa E."/>
            <person name="Omura Y."/>
            <person name="Abe K."/>
            <person name="Kamihara K."/>
            <person name="Katsuta N."/>
            <person name="Sato K."/>
            <person name="Tanikawa M."/>
            <person name="Yamazaki M."/>
            <person name="Ninomiya K."/>
            <person name="Ishibashi T."/>
            <person name="Yamashita H."/>
            <person name="Murakawa K."/>
            <person name="Fujimori K."/>
            <person name="Tanai H."/>
            <person name="Kimata M."/>
            <person name="Watanabe M."/>
            <person name="Hiraoka S."/>
            <person name="Chiba Y."/>
            <person name="Ishida S."/>
            <person name="Ono Y."/>
            <person name="Takiguchi S."/>
            <person name="Watanabe S."/>
            <person name="Yosida M."/>
            <person name="Hotuta T."/>
            <person name="Kusano J."/>
            <person name="Kanehori K."/>
            <person name="Takahashi-Fujii A."/>
            <person name="Hara H."/>
            <person name="Tanase T.-O."/>
            <person name="Nomura Y."/>
            <person name="Togiya S."/>
            <person name="Komai F."/>
            <person name="Hara R."/>
            <person name="Takeuchi K."/>
            <person name="Arita M."/>
            <person name="Imose N."/>
            <person name="Musashino K."/>
            <person name="Yuuki H."/>
            <person name="Oshima A."/>
            <person name="Sasaki N."/>
            <person name="Aotsuka S."/>
            <person name="Yoshikawa Y."/>
            <person name="Matsunawa H."/>
            <person name="Ichihara T."/>
            <person name="Shiohata N."/>
            <person name="Sano S."/>
            <person name="Moriya S."/>
            <person name="Momiyama H."/>
            <person name="Satoh N."/>
            <person name="Takami S."/>
            <person name="Terashima Y."/>
            <person name="Suzuki O."/>
            <person name="Nakagawa S."/>
            <person name="Senoh A."/>
            <person name="Mizoguchi H."/>
            <person name="Goto Y."/>
            <person name="Shimizu F."/>
            <person name="Wakebe H."/>
            <person name="Hishigaki H."/>
            <person name="Watanabe T."/>
            <person name="Sugiyama A."/>
            <person name="Takemoto M."/>
            <person name="Kawakami B."/>
            <person name="Yamazaki M."/>
            <person name="Watanabe K."/>
            <person name="Kumagai A."/>
            <person name="Itakura S."/>
            <person name="Fukuzumi Y."/>
            <person name="Fujimori Y."/>
            <person name="Komiyama M."/>
            <person name="Tashiro H."/>
            <person name="Tanigami A."/>
            <person name="Fujiwara T."/>
            <person name="Ono T."/>
            <person name="Yamada K."/>
            <person name="Fujii Y."/>
            <person name="Ozaki K."/>
            <person name="Hirao M."/>
            <person name="Ohmori Y."/>
            <person name="Kawabata A."/>
            <person name="Hikiji T."/>
            <person name="Kobatake N."/>
            <person name="Inagaki H."/>
            <person name="Ikema Y."/>
            <person name="Okamoto S."/>
            <person name="Okitani R."/>
            <person name="Kawakami T."/>
            <person name="Noguchi S."/>
            <person name="Itoh T."/>
            <person name="Shigeta K."/>
            <person name="Senba T."/>
            <person name="Matsumura K."/>
            <person name="Nakajima Y."/>
            <person name="Mizuno T."/>
            <person name="Morinaga M."/>
            <person name="Sasaki M."/>
            <person name="Togashi T."/>
            <person name="Oyama M."/>
            <person name="Hata H."/>
            <person name="Watanabe M."/>
            <person name="Komatsu T."/>
            <person name="Mizushima-Sugano J."/>
            <person name="Satoh T."/>
            <person name="Shirai Y."/>
            <person name="Takahashi Y."/>
            <person name="Nakagawa K."/>
            <person name="Okumura K."/>
            <person name="Nagase T."/>
            <person name="Nomura N."/>
            <person name="Kikuchi H."/>
            <person name="Masuho Y."/>
            <person name="Yamashita R."/>
            <person name="Nakai K."/>
            <person name="Yada T."/>
            <person name="Nakamura Y."/>
            <person name="Ohara O."/>
            <person name="Isogai T."/>
            <person name="Sugano S."/>
        </authorList>
    </citation>
    <scope>NUCLEOTIDE SEQUENCE [LARGE SCALE MRNA]</scope>
    <source>
        <tissue>Spleen</tissue>
    </source>
</reference>
<reference key="4">
    <citation type="journal article" date="2005" name="Nature">
        <title>Generation and annotation of the DNA sequences of human chromosomes 2 and 4.</title>
        <authorList>
            <person name="Hillier L.W."/>
            <person name="Graves T.A."/>
            <person name="Fulton R.S."/>
            <person name="Fulton L.A."/>
            <person name="Pepin K.H."/>
            <person name="Minx P."/>
            <person name="Wagner-McPherson C."/>
            <person name="Layman D."/>
            <person name="Wylie K."/>
            <person name="Sekhon M."/>
            <person name="Becker M.C."/>
            <person name="Fewell G.A."/>
            <person name="Delehaunty K.D."/>
            <person name="Miner T.L."/>
            <person name="Nash W.E."/>
            <person name="Kremitzki C."/>
            <person name="Oddy L."/>
            <person name="Du H."/>
            <person name="Sun H."/>
            <person name="Bradshaw-Cordum H."/>
            <person name="Ali J."/>
            <person name="Carter J."/>
            <person name="Cordes M."/>
            <person name="Harris A."/>
            <person name="Isak A."/>
            <person name="van Brunt A."/>
            <person name="Nguyen C."/>
            <person name="Du F."/>
            <person name="Courtney L."/>
            <person name="Kalicki J."/>
            <person name="Ozersky P."/>
            <person name="Abbott S."/>
            <person name="Armstrong J."/>
            <person name="Belter E.A."/>
            <person name="Caruso L."/>
            <person name="Cedroni M."/>
            <person name="Cotton M."/>
            <person name="Davidson T."/>
            <person name="Desai A."/>
            <person name="Elliott G."/>
            <person name="Erb T."/>
            <person name="Fronick C."/>
            <person name="Gaige T."/>
            <person name="Haakenson W."/>
            <person name="Haglund K."/>
            <person name="Holmes A."/>
            <person name="Harkins R."/>
            <person name="Kim K."/>
            <person name="Kruchowski S.S."/>
            <person name="Strong C.M."/>
            <person name="Grewal N."/>
            <person name="Goyea E."/>
            <person name="Hou S."/>
            <person name="Levy A."/>
            <person name="Martinka S."/>
            <person name="Mead K."/>
            <person name="McLellan M.D."/>
            <person name="Meyer R."/>
            <person name="Randall-Maher J."/>
            <person name="Tomlinson C."/>
            <person name="Dauphin-Kohlberg S."/>
            <person name="Kozlowicz-Reilly A."/>
            <person name="Shah N."/>
            <person name="Swearengen-Shahid S."/>
            <person name="Snider J."/>
            <person name="Strong J.T."/>
            <person name="Thompson J."/>
            <person name="Yoakum M."/>
            <person name="Leonard S."/>
            <person name="Pearman C."/>
            <person name="Trani L."/>
            <person name="Radionenko M."/>
            <person name="Waligorski J.E."/>
            <person name="Wang C."/>
            <person name="Rock S.M."/>
            <person name="Tin-Wollam A.-M."/>
            <person name="Maupin R."/>
            <person name="Latreille P."/>
            <person name="Wendl M.C."/>
            <person name="Yang S.-P."/>
            <person name="Pohl C."/>
            <person name="Wallis J.W."/>
            <person name="Spieth J."/>
            <person name="Bieri T.A."/>
            <person name="Berkowicz N."/>
            <person name="Nelson J.O."/>
            <person name="Osborne J."/>
            <person name="Ding L."/>
            <person name="Meyer R."/>
            <person name="Sabo A."/>
            <person name="Shotland Y."/>
            <person name="Sinha P."/>
            <person name="Wohldmann P.E."/>
            <person name="Cook L.L."/>
            <person name="Hickenbotham M.T."/>
            <person name="Eldred J."/>
            <person name="Williams D."/>
            <person name="Jones T.A."/>
            <person name="She X."/>
            <person name="Ciccarelli F.D."/>
            <person name="Izaurralde E."/>
            <person name="Taylor J."/>
            <person name="Schmutz J."/>
            <person name="Myers R.M."/>
            <person name="Cox D.R."/>
            <person name="Huang X."/>
            <person name="McPherson J.D."/>
            <person name="Mardis E.R."/>
            <person name="Clifton S.W."/>
            <person name="Warren W.C."/>
            <person name="Chinwalla A.T."/>
            <person name="Eddy S.R."/>
            <person name="Marra M.A."/>
            <person name="Ovcharenko I."/>
            <person name="Furey T.S."/>
            <person name="Miller W."/>
            <person name="Eichler E.E."/>
            <person name="Bork P."/>
            <person name="Suyama M."/>
            <person name="Torrents D."/>
            <person name="Waterston R.H."/>
            <person name="Wilson R.K."/>
        </authorList>
    </citation>
    <scope>NUCLEOTIDE SEQUENCE [LARGE SCALE GENOMIC DNA]</scope>
</reference>
<reference key="5">
    <citation type="submission" date="2005-07" db="EMBL/GenBank/DDBJ databases">
        <authorList>
            <person name="Mural R.J."/>
            <person name="Istrail S."/>
            <person name="Sutton G."/>
            <person name="Florea L."/>
            <person name="Halpern A.L."/>
            <person name="Mobarry C.M."/>
            <person name="Lippert R."/>
            <person name="Walenz B."/>
            <person name="Shatkay H."/>
            <person name="Dew I."/>
            <person name="Miller J.R."/>
            <person name="Flanigan M.J."/>
            <person name="Edwards N.J."/>
            <person name="Bolanos R."/>
            <person name="Fasulo D."/>
            <person name="Halldorsson B.V."/>
            <person name="Hannenhalli S."/>
            <person name="Turner R."/>
            <person name="Yooseph S."/>
            <person name="Lu F."/>
            <person name="Nusskern D.R."/>
            <person name="Shue B.C."/>
            <person name="Zheng X.H."/>
            <person name="Zhong F."/>
            <person name="Delcher A.L."/>
            <person name="Huson D.H."/>
            <person name="Kravitz S.A."/>
            <person name="Mouchard L."/>
            <person name="Reinert K."/>
            <person name="Remington K.A."/>
            <person name="Clark A.G."/>
            <person name="Waterman M.S."/>
            <person name="Eichler E.E."/>
            <person name="Adams M.D."/>
            <person name="Hunkapiller M.W."/>
            <person name="Myers E.W."/>
            <person name="Venter J.C."/>
        </authorList>
    </citation>
    <scope>NUCLEOTIDE SEQUENCE [LARGE SCALE GENOMIC DNA]</scope>
</reference>
<reference key="6">
    <citation type="journal article" date="1994" name="Neuropharmacology">
        <title>Expression of cyclic nucleotide-gated cation channels in non-sensory tissues and cells.</title>
        <authorList>
            <person name="Distler M."/>
            <person name="Biel M."/>
            <person name="Flockerzi V."/>
            <person name="Hofmann F."/>
        </authorList>
    </citation>
    <scope>NUCLEOTIDE SEQUENCE [GENOMIC DNA] OF 313-573</scope>
</reference>
<reference key="7">
    <citation type="journal article" date="2001" name="Science">
        <title>Nomenclature for ion channel subunits.</title>
        <authorList>
            <person name="Bradley J."/>
            <person name="Frings S."/>
            <person name="Yau K.W."/>
            <person name="Reed R."/>
        </authorList>
    </citation>
    <scope>NOMENCLATURE</scope>
</reference>
<reference key="8">
    <citation type="journal article" date="2021" name="Neuron">
        <title>Structural mechanisms of gating and selectivity of human rod CNGA1 channel.</title>
        <authorList>
            <person name="Xue J."/>
            <person name="Han Y."/>
            <person name="Zeng W."/>
            <person name="Wang Y."/>
            <person name="Jiang Y."/>
        </authorList>
    </citation>
    <scope>STRUCTURE BY ELECTRON MICROSCOPY (2.60 ANGSTROMS) OF 140-686</scope>
    <scope>FUNCTION</scope>
    <scope>ACTIVITY REGULATION</scope>
    <scope>SUBUNIT</scope>
    <scope>MUTAGENESIS OF GLU-361</scope>
</reference>
<reference key="9">
    <citation type="journal article" date="2022" name="Neuron">
        <title>Structural mechanisms of assembly, permeation, gating, and pharmacology of native human rod CNG channel.</title>
        <authorList>
            <person name="Xue J."/>
            <person name="Han Y."/>
            <person name="Zeng W."/>
            <person name="Jiang Y."/>
        </authorList>
    </citation>
    <scope>STRUCTURE BY ELECTRON MICROSCOPY (2.61 ANGSTROMS) OF 140-686 IN COMPLEX WITH 3',5'-CYCLIC GMP AND 3',5'-CYCLIC AMP</scope>
    <scope>FUNCTION</scope>
    <scope>ACTIVITY REGULATION</scope>
    <scope>SUBUNIT</scope>
    <scope>DOMAIN</scope>
    <scope>TOPOLOGY</scope>
</reference>
<reference key="10">
    <citation type="journal article" date="1995" name="Proc. Natl. Acad. Sci. U.S.A.">
        <title>Mutations in the gene encoding the alpha subunit of the rod cGMP-gated channel in autosomal recessive retinitis pigmentosa.</title>
        <authorList>
            <person name="Dryja T.P."/>
            <person name="Finn J.T."/>
            <person name="Peng Y.-W."/>
            <person name="McGee T.L."/>
            <person name="Berson E.L."/>
            <person name="Yau K.-W."/>
        </authorList>
    </citation>
    <scope>VARIANT RP49 PHE-316</scope>
    <scope>VARIANTS GLN-28 AND ASN-114</scope>
    <scope>FUNCTION</scope>
    <scope>SUBCELLULAR LOCATION</scope>
</reference>
<reference key="11">
    <citation type="journal article" date="2004" name="Mol. Vis.">
        <title>Autosomal recessive retinitis pigmentosa in a Pakistani family mapped to CNGA1 with identification of a novel mutation.</title>
        <authorList>
            <person name="Zhang Q."/>
            <person name="Zulfiqar F."/>
            <person name="Riazuddin S.A."/>
            <person name="Xiao X."/>
            <person name="Ahmad Z."/>
            <person name="Riazuddin S."/>
            <person name="Hejtmancik J.F."/>
        </authorList>
    </citation>
    <scope>INVOLVEMENT IN RP49</scope>
</reference>
<proteinExistence type="evidence at protein level"/>
<feature type="chain" id="PRO_0000219308" description="Cyclic nucleotide-gated channel alpha-1">
    <location>
        <begin position="1"/>
        <end position="686"/>
    </location>
</feature>
<feature type="topological domain" description="Cytoplasmic" evidence="12">
    <location>
        <begin position="1"/>
        <end position="165"/>
    </location>
</feature>
<feature type="transmembrane region" description="Helical; Name=S1" evidence="7 15">
    <location>
        <begin position="166"/>
        <end position="187"/>
    </location>
</feature>
<feature type="topological domain" description="Extracellular" evidence="12">
    <location>
        <begin position="188"/>
        <end position="197"/>
    </location>
</feature>
<feature type="transmembrane region" description="Helical; Name=S2" evidence="7 15">
    <location>
        <begin position="198"/>
        <end position="218"/>
    </location>
</feature>
<feature type="topological domain" description="Cytoplasmic" evidence="12">
    <location>
        <begin position="219"/>
        <end position="243"/>
    </location>
</feature>
<feature type="transmembrane region" description="Helical; Name=S3" evidence="7 15">
    <location>
        <begin position="244"/>
        <end position="262"/>
    </location>
</feature>
<feature type="topological domain" description="Extracellular" evidence="12">
    <location>
        <begin position="263"/>
        <end position="267"/>
    </location>
</feature>
<feature type="transmembrane region" description="Helical; Name=S4" evidence="7 15">
    <location>
        <begin position="268"/>
        <end position="286"/>
    </location>
</feature>
<feature type="topological domain" description="Cytoplasmic" evidence="12">
    <location>
        <begin position="287"/>
        <end position="293"/>
    </location>
</feature>
<feature type="transmembrane region" description="Helical; Name=S5" evidence="7 15">
    <location>
        <begin position="294"/>
        <end position="317"/>
    </location>
</feature>
<feature type="topological domain" description="Extracellular" evidence="12">
    <location>
        <begin position="318"/>
        <end position="340"/>
    </location>
</feature>
<feature type="transmembrane region" description="Helical; Name=P-helix" evidence="7 15">
    <location>
        <begin position="341"/>
        <end position="375"/>
    </location>
</feature>
<feature type="transmembrane region" description="Helical; Name=S6" evidence="7 15">
    <location>
        <begin position="376"/>
        <end position="400"/>
    </location>
</feature>
<feature type="topological domain" description="Cytoplasmic" evidence="12">
    <location>
        <begin position="401"/>
        <end position="686"/>
    </location>
</feature>
<feature type="region of interest" description="Disordered" evidence="3">
    <location>
        <begin position="31"/>
        <end position="75"/>
    </location>
</feature>
<feature type="region of interest" description="Disordered" evidence="3">
    <location>
        <begin position="87"/>
        <end position="149"/>
    </location>
</feature>
<feature type="region of interest" description="Ion conduction pathway" evidence="13">
    <location>
        <begin position="291"/>
        <end position="399"/>
    </location>
</feature>
<feature type="region of interest" description="Selectivity filter" evidence="13">
    <location>
        <begin position="358"/>
        <end position="361"/>
    </location>
</feature>
<feature type="region of interest" description="C-linker" evidence="13">
    <location>
        <begin position="401"/>
        <end position="477"/>
    </location>
</feature>
<feature type="region of interest" description="Cyclic nucleotide-binding domain" evidence="13 18">
    <location>
        <begin position="481"/>
        <end position="601"/>
    </location>
</feature>
<feature type="coiled-coil region" evidence="7">
    <location>
        <begin position="619"/>
        <end position="673"/>
    </location>
</feature>
<feature type="compositionally biased region" description="Acidic residues" evidence="3">
    <location>
        <begin position="39"/>
        <end position="53"/>
    </location>
</feature>
<feature type="compositionally biased region" description="Basic and acidic residues" evidence="3">
    <location>
        <begin position="110"/>
        <end position="124"/>
    </location>
</feature>
<feature type="compositionally biased region" description="Basic residues" evidence="3">
    <location>
        <begin position="125"/>
        <end position="134"/>
    </location>
</feature>
<feature type="compositionally biased region" description="Basic and acidic residues" evidence="3">
    <location>
        <begin position="135"/>
        <end position="149"/>
    </location>
</feature>
<feature type="binding site" evidence="7 17">
    <location>
        <position position="541"/>
    </location>
    <ligand>
        <name>3',5'-cyclic GMP</name>
        <dbReference type="ChEBI" id="CHEBI:57746"/>
    </ligand>
</feature>
<feature type="binding site" evidence="7 17">
    <location>
        <position position="544"/>
    </location>
    <ligand>
        <name>3',5'-cyclic GMP</name>
        <dbReference type="ChEBI" id="CHEBI:57746"/>
    </ligand>
</feature>
<feature type="binding site" evidence="7 16">
    <location>
        <position position="557"/>
    </location>
    <ligand>
        <name>3',5'-cyclic AMP</name>
        <dbReference type="ChEBI" id="CHEBI:58165"/>
    </ligand>
</feature>
<feature type="binding site" evidence="7 17">
    <location>
        <position position="557"/>
    </location>
    <ligand>
        <name>3',5'-cyclic GMP</name>
        <dbReference type="ChEBI" id="CHEBI:57746"/>
    </ligand>
</feature>
<feature type="binding site" evidence="7 16">
    <location>
        <position position="558"/>
    </location>
    <ligand>
        <name>3',5'-cyclic AMP</name>
        <dbReference type="ChEBI" id="CHEBI:58165"/>
    </ligand>
</feature>
<feature type="binding site" evidence="7 17">
    <location>
        <position position="558"/>
    </location>
    <ligand>
        <name>3',5'-cyclic GMP</name>
        <dbReference type="ChEBI" id="CHEBI:57746"/>
    </ligand>
</feature>
<feature type="site" description="Central gate" evidence="13">
    <location>
        <position position="385"/>
    </location>
</feature>
<feature type="site" description="Central gate" evidence="13">
    <location>
        <position position="389"/>
    </location>
</feature>
<feature type="glycosylation site" description="N-linked (GlcNAc...) asparagine" evidence="1">
    <location>
        <position position="325"/>
    </location>
</feature>
<feature type="sequence variant" id="VAR_009295" description="In dbSNP:rs76537883." evidence="8">
    <original>R</original>
    <variation>Q</variation>
    <location>
        <position position="28"/>
    </location>
</feature>
<feature type="sequence variant" id="VAR_009296" description="In dbSNP:rs28642966." evidence="4 8">
    <original>D</original>
    <variation>N</variation>
    <location>
        <position position="114"/>
    </location>
</feature>
<feature type="sequence variant" id="VAR_047385" description="In dbSNP:rs28642966.">
    <original>N</original>
    <variation>D</variation>
    <location>
        <position position="118"/>
    </location>
</feature>
<feature type="sequence variant" id="VAR_009297" description="In RP49; dbSNP:rs62625014." evidence="8">
    <original>S</original>
    <variation>F</variation>
    <location>
        <position position="316"/>
    </location>
</feature>
<feature type="mutagenesis site" description="Renders the channel voltage-gated in the presence of saturated concentrations of cGMP." evidence="6">
    <original>E</original>
    <variation>Q</variation>
    <location>
        <position position="361"/>
    </location>
</feature>
<feature type="sequence conflict" description="In Ref. 3; BAF84710 and 1; AAA52010." evidence="12" ref="3 1">
    <original>M</original>
    <variation>MKLSM</variation>
    <location>
        <position position="1"/>
    </location>
</feature>
<feature type="sequence conflict" description="In Ref. 3; BAF84710." evidence="12" ref="3">
    <original>E</original>
    <variation>V</variation>
    <location>
        <position position="31"/>
    </location>
</feature>
<feature type="sequence conflict" description="In Ref. 1; AAA52010." evidence="12" ref="1">
    <original>S</original>
    <variation>Y</variation>
    <location>
        <position position="46"/>
    </location>
</feature>
<feature type="sequence conflict" description="In Ref. 1; AAA52010." evidence="12" ref="1">
    <original>L</original>
    <variation>I</variation>
    <location>
        <position position="85"/>
    </location>
</feature>
<feature type="sequence conflict" description="In Ref. 1; AAA52010." evidence="12" ref="1">
    <original>EE</original>
    <variation>HH</variation>
    <location>
        <begin position="146"/>
        <end position="147"/>
    </location>
</feature>
<feature type="sequence conflict" description="In Ref. 3; BAF84710." evidence="12" ref="3">
    <original>I</original>
    <variation>V</variation>
    <location>
        <position position="205"/>
    </location>
</feature>
<feature type="sequence conflict" description="In Ref. 1; AAA52010." evidence="12" ref="1">
    <original>Y</original>
    <variation>T</variation>
    <location>
        <position position="539"/>
    </location>
</feature>
<feature type="sequence conflict" description="In Ref. 1; AAA52010." evidence="12" ref="1">
    <original>GA</original>
    <variation>WS</variation>
    <location>
        <begin position="677"/>
        <end position="678"/>
    </location>
</feature>
<feature type="helix" evidence="19">
    <location>
        <begin position="159"/>
        <end position="184"/>
    </location>
</feature>
<feature type="helix" evidence="19">
    <location>
        <begin position="186"/>
        <end position="191"/>
    </location>
</feature>
<feature type="helix" evidence="19">
    <location>
        <begin position="193"/>
        <end position="215"/>
    </location>
</feature>
<feature type="helix" evidence="19">
    <location>
        <begin position="229"/>
        <end position="237"/>
    </location>
</feature>
<feature type="helix" evidence="19">
    <location>
        <begin position="240"/>
        <end position="249"/>
    </location>
</feature>
<feature type="helix" evidence="21">
    <location>
        <begin position="252"/>
        <end position="254"/>
    </location>
</feature>
<feature type="helix" evidence="19">
    <location>
        <begin position="255"/>
        <end position="258"/>
    </location>
</feature>
<feature type="helix" evidence="19">
    <location>
        <begin position="264"/>
        <end position="273"/>
    </location>
</feature>
<feature type="helix" evidence="19">
    <location>
        <begin position="274"/>
        <end position="285"/>
    </location>
</feature>
<feature type="helix" evidence="19">
    <location>
        <begin position="291"/>
        <end position="321"/>
    </location>
</feature>
<feature type="strand" evidence="19">
    <location>
        <begin position="325"/>
        <end position="329"/>
    </location>
</feature>
<feature type="turn" evidence="19">
    <location>
        <begin position="336"/>
        <end position="339"/>
    </location>
</feature>
<feature type="helix" evidence="19">
    <location>
        <begin position="341"/>
        <end position="356"/>
    </location>
</feature>
<feature type="helix" evidence="19">
    <location>
        <begin position="368"/>
        <end position="399"/>
    </location>
</feature>
<feature type="helix" evidence="19">
    <location>
        <begin position="401"/>
        <end position="419"/>
    </location>
</feature>
<feature type="helix" evidence="19">
    <location>
        <begin position="424"/>
        <end position="439"/>
    </location>
</feature>
<feature type="helix" evidence="19">
    <location>
        <begin position="446"/>
        <end position="450"/>
    </location>
</feature>
<feature type="strand" evidence="22">
    <location>
        <begin position="451"/>
        <end position="453"/>
    </location>
</feature>
<feature type="helix" evidence="19">
    <location>
        <begin position="455"/>
        <end position="472"/>
    </location>
</feature>
<feature type="helix" evidence="19">
    <location>
        <begin position="475"/>
        <end position="478"/>
    </location>
</feature>
<feature type="helix" evidence="19">
    <location>
        <begin position="481"/>
        <end position="488"/>
    </location>
</feature>
<feature type="strand" evidence="19">
    <location>
        <begin position="492"/>
        <end position="494"/>
    </location>
</feature>
<feature type="strand" evidence="19">
    <location>
        <begin position="501"/>
        <end position="503"/>
    </location>
</feature>
<feature type="strand" evidence="20">
    <location>
        <begin position="505"/>
        <end position="507"/>
    </location>
</feature>
<feature type="strand" evidence="19">
    <location>
        <begin position="511"/>
        <end position="517"/>
    </location>
</feature>
<feature type="strand" evidence="19">
    <location>
        <begin position="520"/>
        <end position="523"/>
    </location>
</feature>
<feature type="strand" evidence="21">
    <location>
        <begin position="525"/>
        <end position="528"/>
    </location>
</feature>
<feature type="strand" evidence="19">
    <location>
        <begin position="530"/>
        <end position="534"/>
    </location>
</feature>
<feature type="strand" evidence="20">
    <location>
        <begin position="539"/>
        <end position="541"/>
    </location>
</feature>
<feature type="turn" evidence="19">
    <location>
        <begin position="542"/>
        <end position="545"/>
    </location>
</feature>
<feature type="turn" evidence="21">
    <location>
        <begin position="552"/>
        <end position="555"/>
    </location>
</feature>
<feature type="strand" evidence="19">
    <location>
        <begin position="559"/>
        <end position="565"/>
    </location>
</feature>
<feature type="strand" evidence="19">
    <location>
        <begin position="569"/>
        <end position="573"/>
    </location>
</feature>
<feature type="helix" evidence="19">
    <location>
        <begin position="574"/>
        <end position="581"/>
    </location>
</feature>
<feature type="helix" evidence="19">
    <location>
        <begin position="585"/>
        <end position="600"/>
    </location>
</feature>
<feature type="helix" evidence="23">
    <location>
        <begin position="622"/>
        <end position="658"/>
    </location>
</feature>